<sequence>MSNTQLSYKDAGVDIHAGNELVERIKGDVKRTNRSEVMGGLGGFGALCALPTKYKEPILVSGTDGVGTKLRLAIDLKKHDTIGQDLVAMCVNDLIVQGAEPLFFLDYYATGKLDVDVAASVIKGIAYGCEMSGCALVGGETAEMPGMYHEGDYDLAGFCVGVVEKSEIIDGTAVKTGDTLIALGSSGAHSNGYSLIRKVLEVSGANPADLLEGKPLSEHFLAPTKIYVKSILQLIKQTEVHAIAHLTGGGFWENIPRVLPDNTKAVIDESSWQWPAIFNWLQEKGNISRYEMYRTFNCGVGMVIALPEKEVETALALLEQSGEKAWVIGKIEHLGEGEAQVEIQ</sequence>
<reference key="1">
    <citation type="journal article" date="2007" name="Genome Biol.">
        <title>Characterization and modeling of the Haemophilus influenzae core and supragenomes based on the complete genomic sequences of Rd and 12 clinical nontypeable strains.</title>
        <authorList>
            <person name="Hogg J.S."/>
            <person name="Hu F.Z."/>
            <person name="Janto B."/>
            <person name="Boissy R."/>
            <person name="Hayes J."/>
            <person name="Keefe R."/>
            <person name="Post J.C."/>
            <person name="Ehrlich G.D."/>
        </authorList>
    </citation>
    <scope>NUCLEOTIDE SEQUENCE [LARGE SCALE GENOMIC DNA]</scope>
    <source>
        <strain>PittEE</strain>
    </source>
</reference>
<protein>
    <recommendedName>
        <fullName evidence="1">Phosphoribosylformylglycinamidine cyclo-ligase</fullName>
        <ecNumber evidence="1">6.3.3.1</ecNumber>
    </recommendedName>
    <alternativeName>
        <fullName evidence="1">AIR synthase</fullName>
    </alternativeName>
    <alternativeName>
        <fullName evidence="1">AIRS</fullName>
    </alternativeName>
    <alternativeName>
        <fullName evidence="1">Phosphoribosyl-aminoimidazole synthetase</fullName>
    </alternativeName>
</protein>
<dbReference type="EC" id="6.3.3.1" evidence="1"/>
<dbReference type="EMBL" id="CP000671">
    <property type="protein sequence ID" value="ABQ98340.1"/>
    <property type="molecule type" value="Genomic_DNA"/>
</dbReference>
<dbReference type="SMR" id="A5UC39"/>
<dbReference type="KEGG" id="hip:CGSHiEE_04725"/>
<dbReference type="HOGENOM" id="CLU_047116_0_0_6"/>
<dbReference type="UniPathway" id="UPA00074">
    <property type="reaction ID" value="UER00129"/>
</dbReference>
<dbReference type="GO" id="GO:0005829">
    <property type="term" value="C:cytosol"/>
    <property type="evidence" value="ECO:0007669"/>
    <property type="project" value="TreeGrafter"/>
</dbReference>
<dbReference type="GO" id="GO:0005524">
    <property type="term" value="F:ATP binding"/>
    <property type="evidence" value="ECO:0007669"/>
    <property type="project" value="UniProtKB-KW"/>
</dbReference>
<dbReference type="GO" id="GO:0004637">
    <property type="term" value="F:phosphoribosylamine-glycine ligase activity"/>
    <property type="evidence" value="ECO:0007669"/>
    <property type="project" value="TreeGrafter"/>
</dbReference>
<dbReference type="GO" id="GO:0004641">
    <property type="term" value="F:phosphoribosylformylglycinamidine cyclo-ligase activity"/>
    <property type="evidence" value="ECO:0007669"/>
    <property type="project" value="UniProtKB-UniRule"/>
</dbReference>
<dbReference type="GO" id="GO:0006189">
    <property type="term" value="P:'de novo' IMP biosynthetic process"/>
    <property type="evidence" value="ECO:0007669"/>
    <property type="project" value="UniProtKB-UniRule"/>
</dbReference>
<dbReference type="GO" id="GO:0046084">
    <property type="term" value="P:adenine biosynthetic process"/>
    <property type="evidence" value="ECO:0007669"/>
    <property type="project" value="TreeGrafter"/>
</dbReference>
<dbReference type="CDD" id="cd02196">
    <property type="entry name" value="PurM"/>
    <property type="match status" value="1"/>
</dbReference>
<dbReference type="FunFam" id="3.30.1330.10:FF:000001">
    <property type="entry name" value="Phosphoribosylformylglycinamidine cyclo-ligase"/>
    <property type="match status" value="1"/>
</dbReference>
<dbReference type="FunFam" id="3.90.650.10:FF:000001">
    <property type="entry name" value="Phosphoribosylformylglycinamidine cyclo-ligase"/>
    <property type="match status" value="1"/>
</dbReference>
<dbReference type="Gene3D" id="3.90.650.10">
    <property type="entry name" value="PurM-like C-terminal domain"/>
    <property type="match status" value="1"/>
</dbReference>
<dbReference type="Gene3D" id="3.30.1330.10">
    <property type="entry name" value="PurM-like, N-terminal domain"/>
    <property type="match status" value="1"/>
</dbReference>
<dbReference type="HAMAP" id="MF_00741">
    <property type="entry name" value="AIRS"/>
    <property type="match status" value="1"/>
</dbReference>
<dbReference type="InterPro" id="IPR010918">
    <property type="entry name" value="PurM-like_C_dom"/>
</dbReference>
<dbReference type="InterPro" id="IPR036676">
    <property type="entry name" value="PurM-like_C_sf"/>
</dbReference>
<dbReference type="InterPro" id="IPR016188">
    <property type="entry name" value="PurM-like_N"/>
</dbReference>
<dbReference type="InterPro" id="IPR036921">
    <property type="entry name" value="PurM-like_N_sf"/>
</dbReference>
<dbReference type="InterPro" id="IPR004733">
    <property type="entry name" value="PurM_cligase"/>
</dbReference>
<dbReference type="NCBIfam" id="TIGR00878">
    <property type="entry name" value="purM"/>
    <property type="match status" value="1"/>
</dbReference>
<dbReference type="PANTHER" id="PTHR10520:SF12">
    <property type="entry name" value="TRIFUNCTIONAL PURINE BIOSYNTHETIC PROTEIN ADENOSINE-3"/>
    <property type="match status" value="1"/>
</dbReference>
<dbReference type="PANTHER" id="PTHR10520">
    <property type="entry name" value="TRIFUNCTIONAL PURINE BIOSYNTHETIC PROTEIN ADENOSINE-3-RELATED"/>
    <property type="match status" value="1"/>
</dbReference>
<dbReference type="Pfam" id="PF00586">
    <property type="entry name" value="AIRS"/>
    <property type="match status" value="1"/>
</dbReference>
<dbReference type="Pfam" id="PF02769">
    <property type="entry name" value="AIRS_C"/>
    <property type="match status" value="1"/>
</dbReference>
<dbReference type="SUPFAM" id="SSF56042">
    <property type="entry name" value="PurM C-terminal domain-like"/>
    <property type="match status" value="1"/>
</dbReference>
<dbReference type="SUPFAM" id="SSF55326">
    <property type="entry name" value="PurM N-terminal domain-like"/>
    <property type="match status" value="1"/>
</dbReference>
<keyword id="KW-0067">ATP-binding</keyword>
<keyword id="KW-0963">Cytoplasm</keyword>
<keyword id="KW-0436">Ligase</keyword>
<keyword id="KW-0547">Nucleotide-binding</keyword>
<keyword id="KW-0658">Purine biosynthesis</keyword>
<feature type="chain" id="PRO_1000046438" description="Phosphoribosylformylglycinamidine cyclo-ligase">
    <location>
        <begin position="1"/>
        <end position="344"/>
    </location>
</feature>
<organism>
    <name type="scientific">Haemophilus influenzae (strain PittEE)</name>
    <dbReference type="NCBI Taxonomy" id="374930"/>
    <lineage>
        <taxon>Bacteria</taxon>
        <taxon>Pseudomonadati</taxon>
        <taxon>Pseudomonadota</taxon>
        <taxon>Gammaproteobacteria</taxon>
        <taxon>Pasteurellales</taxon>
        <taxon>Pasteurellaceae</taxon>
        <taxon>Haemophilus</taxon>
    </lineage>
</organism>
<proteinExistence type="inferred from homology"/>
<evidence type="ECO:0000255" key="1">
    <source>
        <dbReference type="HAMAP-Rule" id="MF_00741"/>
    </source>
</evidence>
<accession>A5UC39</accession>
<gene>
    <name evidence="1" type="primary">purM</name>
    <name type="ordered locus">CGSHiEE_04725</name>
</gene>
<name>PUR5_HAEIE</name>
<comment type="catalytic activity">
    <reaction evidence="1">
        <text>2-formamido-N(1)-(5-O-phospho-beta-D-ribosyl)acetamidine + ATP = 5-amino-1-(5-phospho-beta-D-ribosyl)imidazole + ADP + phosphate + H(+)</text>
        <dbReference type="Rhea" id="RHEA:23032"/>
        <dbReference type="ChEBI" id="CHEBI:15378"/>
        <dbReference type="ChEBI" id="CHEBI:30616"/>
        <dbReference type="ChEBI" id="CHEBI:43474"/>
        <dbReference type="ChEBI" id="CHEBI:137981"/>
        <dbReference type="ChEBI" id="CHEBI:147287"/>
        <dbReference type="ChEBI" id="CHEBI:456216"/>
        <dbReference type="EC" id="6.3.3.1"/>
    </reaction>
</comment>
<comment type="pathway">
    <text evidence="1">Purine metabolism; IMP biosynthesis via de novo pathway; 5-amino-1-(5-phospho-D-ribosyl)imidazole from N(2)-formyl-N(1)-(5-phospho-D-ribosyl)glycinamide: step 2/2.</text>
</comment>
<comment type="subcellular location">
    <subcellularLocation>
        <location evidence="1">Cytoplasm</location>
    </subcellularLocation>
</comment>
<comment type="similarity">
    <text evidence="1">Belongs to the AIR synthase family.</text>
</comment>